<protein>
    <recommendedName>
        <fullName evidence="1">Phenylalanine--tRNA ligase alpha subunit</fullName>
        <ecNumber evidence="1">6.1.1.20</ecNumber>
    </recommendedName>
    <alternativeName>
        <fullName evidence="1">Phenylalanyl-tRNA synthetase alpha subunit</fullName>
        <shortName evidence="1">PheRS</shortName>
    </alternativeName>
</protein>
<dbReference type="EC" id="6.1.1.20" evidence="1"/>
<dbReference type="EMBL" id="CP000305">
    <property type="protein sequence ID" value="ABG18212.1"/>
    <property type="molecule type" value="Genomic_DNA"/>
</dbReference>
<dbReference type="EMBL" id="ACNQ01000010">
    <property type="protein sequence ID" value="EEO76787.1"/>
    <property type="molecule type" value="Genomic_DNA"/>
</dbReference>
<dbReference type="RefSeq" id="WP_002211832.1">
    <property type="nucleotide sequence ID" value="NZ_ACNQ01000010.1"/>
</dbReference>
<dbReference type="SMR" id="Q1CIG8"/>
<dbReference type="GeneID" id="57976248"/>
<dbReference type="KEGG" id="ypn:YPN_1883"/>
<dbReference type="HOGENOM" id="CLU_025086_0_1_6"/>
<dbReference type="Proteomes" id="UP000008936">
    <property type="component" value="Chromosome"/>
</dbReference>
<dbReference type="GO" id="GO:0005737">
    <property type="term" value="C:cytoplasm"/>
    <property type="evidence" value="ECO:0007669"/>
    <property type="project" value="UniProtKB-SubCell"/>
</dbReference>
<dbReference type="GO" id="GO:0005524">
    <property type="term" value="F:ATP binding"/>
    <property type="evidence" value="ECO:0007669"/>
    <property type="project" value="UniProtKB-UniRule"/>
</dbReference>
<dbReference type="GO" id="GO:0000287">
    <property type="term" value="F:magnesium ion binding"/>
    <property type="evidence" value="ECO:0007669"/>
    <property type="project" value="UniProtKB-UniRule"/>
</dbReference>
<dbReference type="GO" id="GO:0004826">
    <property type="term" value="F:phenylalanine-tRNA ligase activity"/>
    <property type="evidence" value="ECO:0007669"/>
    <property type="project" value="UniProtKB-UniRule"/>
</dbReference>
<dbReference type="GO" id="GO:0000049">
    <property type="term" value="F:tRNA binding"/>
    <property type="evidence" value="ECO:0007669"/>
    <property type="project" value="InterPro"/>
</dbReference>
<dbReference type="GO" id="GO:0006432">
    <property type="term" value="P:phenylalanyl-tRNA aminoacylation"/>
    <property type="evidence" value="ECO:0007669"/>
    <property type="project" value="UniProtKB-UniRule"/>
</dbReference>
<dbReference type="CDD" id="cd00496">
    <property type="entry name" value="PheRS_alpha_core"/>
    <property type="match status" value="1"/>
</dbReference>
<dbReference type="FunFam" id="3.30.930.10:FF:000003">
    <property type="entry name" value="Phenylalanine--tRNA ligase alpha subunit"/>
    <property type="match status" value="1"/>
</dbReference>
<dbReference type="Gene3D" id="3.30.930.10">
    <property type="entry name" value="Bira Bifunctional Protein, Domain 2"/>
    <property type="match status" value="1"/>
</dbReference>
<dbReference type="HAMAP" id="MF_00281">
    <property type="entry name" value="Phe_tRNA_synth_alpha1"/>
    <property type="match status" value="1"/>
</dbReference>
<dbReference type="InterPro" id="IPR006195">
    <property type="entry name" value="aa-tRNA-synth_II"/>
</dbReference>
<dbReference type="InterPro" id="IPR045864">
    <property type="entry name" value="aa-tRNA-synth_II/BPL/LPL"/>
</dbReference>
<dbReference type="InterPro" id="IPR004529">
    <property type="entry name" value="Phe-tRNA-synth_IIc_asu"/>
</dbReference>
<dbReference type="InterPro" id="IPR004188">
    <property type="entry name" value="Phe-tRNA_ligase_II_N"/>
</dbReference>
<dbReference type="InterPro" id="IPR022911">
    <property type="entry name" value="Phe_tRNA_ligase_alpha1_bac"/>
</dbReference>
<dbReference type="InterPro" id="IPR002319">
    <property type="entry name" value="Phenylalanyl-tRNA_Synthase"/>
</dbReference>
<dbReference type="InterPro" id="IPR010978">
    <property type="entry name" value="tRNA-bd_arm"/>
</dbReference>
<dbReference type="NCBIfam" id="TIGR00468">
    <property type="entry name" value="pheS"/>
    <property type="match status" value="1"/>
</dbReference>
<dbReference type="PANTHER" id="PTHR11538:SF41">
    <property type="entry name" value="PHENYLALANINE--TRNA LIGASE, MITOCHONDRIAL"/>
    <property type="match status" value="1"/>
</dbReference>
<dbReference type="PANTHER" id="PTHR11538">
    <property type="entry name" value="PHENYLALANYL-TRNA SYNTHETASE"/>
    <property type="match status" value="1"/>
</dbReference>
<dbReference type="Pfam" id="PF02912">
    <property type="entry name" value="Phe_tRNA-synt_N"/>
    <property type="match status" value="1"/>
</dbReference>
<dbReference type="Pfam" id="PF01409">
    <property type="entry name" value="tRNA-synt_2d"/>
    <property type="match status" value="1"/>
</dbReference>
<dbReference type="SUPFAM" id="SSF55681">
    <property type="entry name" value="Class II aaRS and biotin synthetases"/>
    <property type="match status" value="1"/>
</dbReference>
<dbReference type="SUPFAM" id="SSF46589">
    <property type="entry name" value="tRNA-binding arm"/>
    <property type="match status" value="1"/>
</dbReference>
<dbReference type="PROSITE" id="PS50862">
    <property type="entry name" value="AA_TRNA_LIGASE_II"/>
    <property type="match status" value="1"/>
</dbReference>
<sequence length="327" mass="37139">MPHLAELVAKAKAAVEGAQDIAALDLVRVEYLGKKGHLTLQMTSLRELPAEERPAAGAVINQAKQEVQEALNARKEKLESAVLNARLAAETIDVSLPGRRMENGGLHPVTRTIERIETFFGELGFSVESGPEIEDDYHNFDALNIPAHHPARADHDTFWFDATRLLRTQTSGVQIRTMQEQQPPIRIIVPGRVYRNDYDQTHTPMFHQMEGLIVDRDISFTNLKGTLHDFLRNFFEEDLQIRFRPSYFPFTEPSAEVDVMGKNGKWLEVLGCGMVHPNVLRNVGIDPEIYSGFAFGMGMERLTMLRYGVTDLRAFFENDLRFLKQFK</sequence>
<keyword id="KW-0030">Aminoacyl-tRNA synthetase</keyword>
<keyword id="KW-0067">ATP-binding</keyword>
<keyword id="KW-0963">Cytoplasm</keyword>
<keyword id="KW-0436">Ligase</keyword>
<keyword id="KW-0460">Magnesium</keyword>
<keyword id="KW-0479">Metal-binding</keyword>
<keyword id="KW-0547">Nucleotide-binding</keyword>
<keyword id="KW-0648">Protein biosynthesis</keyword>
<organism>
    <name type="scientific">Yersinia pestis bv. Antiqua (strain Nepal516)</name>
    <dbReference type="NCBI Taxonomy" id="377628"/>
    <lineage>
        <taxon>Bacteria</taxon>
        <taxon>Pseudomonadati</taxon>
        <taxon>Pseudomonadota</taxon>
        <taxon>Gammaproteobacteria</taxon>
        <taxon>Enterobacterales</taxon>
        <taxon>Yersiniaceae</taxon>
        <taxon>Yersinia</taxon>
    </lineage>
</organism>
<name>SYFA_YERPN</name>
<accession>Q1CIG8</accession>
<accession>C4GTI6</accession>
<proteinExistence type="inferred from homology"/>
<feature type="chain" id="PRO_1000006916" description="Phenylalanine--tRNA ligase alpha subunit">
    <location>
        <begin position="1"/>
        <end position="327"/>
    </location>
</feature>
<feature type="binding site" evidence="1">
    <location>
        <position position="252"/>
    </location>
    <ligand>
        <name>Mg(2+)</name>
        <dbReference type="ChEBI" id="CHEBI:18420"/>
        <note>shared with beta subunit</note>
    </ligand>
</feature>
<evidence type="ECO:0000255" key="1">
    <source>
        <dbReference type="HAMAP-Rule" id="MF_00281"/>
    </source>
</evidence>
<reference key="1">
    <citation type="journal article" date="2006" name="J. Bacteriol.">
        <title>Complete genome sequence of Yersinia pestis strains Antiqua and Nepal516: evidence of gene reduction in an emerging pathogen.</title>
        <authorList>
            <person name="Chain P.S.G."/>
            <person name="Hu P."/>
            <person name="Malfatti S.A."/>
            <person name="Radnedge L."/>
            <person name="Larimer F."/>
            <person name="Vergez L.M."/>
            <person name="Worsham P."/>
            <person name="Chu M.C."/>
            <person name="Andersen G.L."/>
        </authorList>
    </citation>
    <scope>NUCLEOTIDE SEQUENCE [LARGE SCALE GENOMIC DNA]</scope>
    <source>
        <strain>Nepal516</strain>
    </source>
</reference>
<reference key="2">
    <citation type="submission" date="2009-04" db="EMBL/GenBank/DDBJ databases">
        <title>Yersinia pestis Nepal516A whole genome shotgun sequencing project.</title>
        <authorList>
            <person name="Plunkett G. III"/>
            <person name="Anderson B.D."/>
            <person name="Baumler D.J."/>
            <person name="Burland V."/>
            <person name="Cabot E.L."/>
            <person name="Glasner J.D."/>
            <person name="Mau B."/>
            <person name="Neeno-Eckwall E."/>
            <person name="Perna N.T."/>
            <person name="Munk A.C."/>
            <person name="Tapia R."/>
            <person name="Green L.D."/>
            <person name="Rogers Y.C."/>
            <person name="Detter J.C."/>
            <person name="Bruce D.C."/>
            <person name="Brettin T.S."/>
        </authorList>
    </citation>
    <scope>NUCLEOTIDE SEQUENCE [LARGE SCALE GENOMIC DNA]</scope>
    <source>
        <strain>Nepal516</strain>
    </source>
</reference>
<comment type="catalytic activity">
    <reaction evidence="1">
        <text>tRNA(Phe) + L-phenylalanine + ATP = L-phenylalanyl-tRNA(Phe) + AMP + diphosphate + H(+)</text>
        <dbReference type="Rhea" id="RHEA:19413"/>
        <dbReference type="Rhea" id="RHEA-COMP:9668"/>
        <dbReference type="Rhea" id="RHEA-COMP:9699"/>
        <dbReference type="ChEBI" id="CHEBI:15378"/>
        <dbReference type="ChEBI" id="CHEBI:30616"/>
        <dbReference type="ChEBI" id="CHEBI:33019"/>
        <dbReference type="ChEBI" id="CHEBI:58095"/>
        <dbReference type="ChEBI" id="CHEBI:78442"/>
        <dbReference type="ChEBI" id="CHEBI:78531"/>
        <dbReference type="ChEBI" id="CHEBI:456215"/>
        <dbReference type="EC" id="6.1.1.20"/>
    </reaction>
</comment>
<comment type="cofactor">
    <cofactor evidence="1">
        <name>Mg(2+)</name>
        <dbReference type="ChEBI" id="CHEBI:18420"/>
    </cofactor>
    <text evidence="1">Binds 2 magnesium ions per tetramer.</text>
</comment>
<comment type="subunit">
    <text evidence="1">Tetramer of two alpha and two beta subunits.</text>
</comment>
<comment type="subcellular location">
    <subcellularLocation>
        <location evidence="1">Cytoplasm</location>
    </subcellularLocation>
</comment>
<comment type="similarity">
    <text evidence="1">Belongs to the class-II aminoacyl-tRNA synthetase family. Phe-tRNA synthetase alpha subunit type 1 subfamily.</text>
</comment>
<gene>
    <name evidence="1" type="primary">pheS</name>
    <name type="ordered locus">YPN_1883</name>
    <name type="ORF">YP516_2094</name>
</gene>